<accession>A1RUA0</accession>
<dbReference type="EC" id="2.7.8.26" evidence="1"/>
<dbReference type="EMBL" id="CP000504">
    <property type="protein sequence ID" value="ABL88532.1"/>
    <property type="molecule type" value="Genomic_DNA"/>
</dbReference>
<dbReference type="RefSeq" id="WP_011763107.1">
    <property type="nucleotide sequence ID" value="NC_008701.1"/>
</dbReference>
<dbReference type="STRING" id="384616.Pisl_1370"/>
<dbReference type="GeneID" id="4616338"/>
<dbReference type="KEGG" id="pis:Pisl_1370"/>
<dbReference type="eggNOG" id="arCOG04338">
    <property type="taxonomic scope" value="Archaea"/>
</dbReference>
<dbReference type="HOGENOM" id="CLU_057426_2_0_2"/>
<dbReference type="OrthoDB" id="11748at2157"/>
<dbReference type="UniPathway" id="UPA00148">
    <property type="reaction ID" value="UER00238"/>
</dbReference>
<dbReference type="Proteomes" id="UP000002595">
    <property type="component" value="Chromosome"/>
</dbReference>
<dbReference type="GO" id="GO:0005886">
    <property type="term" value="C:plasma membrane"/>
    <property type="evidence" value="ECO:0007669"/>
    <property type="project" value="UniProtKB-SubCell"/>
</dbReference>
<dbReference type="GO" id="GO:0051073">
    <property type="term" value="F:adenosylcobinamide-GDP ribazoletransferase activity"/>
    <property type="evidence" value="ECO:0007669"/>
    <property type="project" value="UniProtKB-UniRule"/>
</dbReference>
<dbReference type="GO" id="GO:0008818">
    <property type="term" value="F:cobalamin 5'-phosphate synthase activity"/>
    <property type="evidence" value="ECO:0007669"/>
    <property type="project" value="UniProtKB-UniRule"/>
</dbReference>
<dbReference type="GO" id="GO:0009236">
    <property type="term" value="P:cobalamin biosynthetic process"/>
    <property type="evidence" value="ECO:0007669"/>
    <property type="project" value="UniProtKB-UniRule"/>
</dbReference>
<dbReference type="HAMAP" id="MF_00719">
    <property type="entry name" value="CobS"/>
    <property type="match status" value="1"/>
</dbReference>
<dbReference type="InterPro" id="IPR003805">
    <property type="entry name" value="CobS"/>
</dbReference>
<dbReference type="PANTHER" id="PTHR34148">
    <property type="entry name" value="ADENOSYLCOBINAMIDE-GDP RIBAZOLETRANSFERASE"/>
    <property type="match status" value="1"/>
</dbReference>
<dbReference type="PANTHER" id="PTHR34148:SF1">
    <property type="entry name" value="ADENOSYLCOBINAMIDE-GDP RIBAZOLETRANSFERASE"/>
    <property type="match status" value="1"/>
</dbReference>
<dbReference type="Pfam" id="PF02654">
    <property type="entry name" value="CobS"/>
    <property type="match status" value="1"/>
</dbReference>
<feature type="chain" id="PRO_1000045796" description="Adenosylcobinamide-GDP ribazoletransferase">
    <location>
        <begin position="1"/>
        <end position="227"/>
    </location>
</feature>
<feature type="transmembrane region" description="Helical" evidence="1">
    <location>
        <begin position="3"/>
        <end position="23"/>
    </location>
</feature>
<feature type="transmembrane region" description="Helical" evidence="1">
    <location>
        <begin position="26"/>
        <end position="46"/>
    </location>
</feature>
<feature type="transmembrane region" description="Helical" evidence="1">
    <location>
        <begin position="95"/>
        <end position="115"/>
    </location>
</feature>
<feature type="transmembrane region" description="Helical" evidence="1">
    <location>
        <begin position="117"/>
        <end position="137"/>
    </location>
</feature>
<feature type="transmembrane region" description="Helical" evidence="1">
    <location>
        <begin position="165"/>
        <end position="185"/>
    </location>
</feature>
<gene>
    <name evidence="1" type="primary">cobS</name>
    <name type="ordered locus">Pisl_1370</name>
</gene>
<sequence>MRCLKAVVAFFTALPVGGAELDFSCIWATPYLAGLMVGGAGGAVYFLTHSPAAAYAALLLATGLHHLDGLADVGDALMVRDRERARRVLEDPRRGVGGIFAVVALFVLAASARPESWLDYIVTDLYSKALALVVAAYSKPFKEGLGSLFIVSAKRQWPAALPALAVAAWLHPAAFLAATVLSLFFYVAAYKHLGGANGDLLGALLEVTRALYLATVDLSTSLINGLF</sequence>
<name>COBS_PYRIL</name>
<organism>
    <name type="scientific">Pyrobaculum islandicum (strain DSM 4184 / JCM 9189 / GEO3)</name>
    <dbReference type="NCBI Taxonomy" id="384616"/>
    <lineage>
        <taxon>Archaea</taxon>
        <taxon>Thermoproteota</taxon>
        <taxon>Thermoprotei</taxon>
        <taxon>Thermoproteales</taxon>
        <taxon>Thermoproteaceae</taxon>
        <taxon>Pyrobaculum</taxon>
    </lineage>
</organism>
<evidence type="ECO:0000255" key="1">
    <source>
        <dbReference type="HAMAP-Rule" id="MF_00719"/>
    </source>
</evidence>
<reference key="1">
    <citation type="submission" date="2006-12" db="EMBL/GenBank/DDBJ databases">
        <title>Complete sequence of Pyrobaculum islandicum DSM 4184.</title>
        <authorList>
            <person name="Copeland A."/>
            <person name="Lucas S."/>
            <person name="Lapidus A."/>
            <person name="Barry K."/>
            <person name="Detter J.C."/>
            <person name="Glavina del Rio T."/>
            <person name="Dalin E."/>
            <person name="Tice H."/>
            <person name="Pitluck S."/>
            <person name="Meincke L."/>
            <person name="Brettin T."/>
            <person name="Bruce D."/>
            <person name="Han C."/>
            <person name="Tapia R."/>
            <person name="Gilna P."/>
            <person name="Schmutz J."/>
            <person name="Larimer F."/>
            <person name="Land M."/>
            <person name="Hauser L."/>
            <person name="Kyrpides N."/>
            <person name="Mikhailova N."/>
            <person name="Cozen A.E."/>
            <person name="Fitz-Gibbon S.T."/>
            <person name="House C.H."/>
            <person name="Saltikov C."/>
            <person name="Lowe T."/>
            <person name="Richardson P."/>
        </authorList>
    </citation>
    <scope>NUCLEOTIDE SEQUENCE [LARGE SCALE GENOMIC DNA]</scope>
    <source>
        <strain>DSM 4184 / JCM 9189 / GEO3</strain>
    </source>
</reference>
<comment type="function">
    <text evidence="1">Joins adenosylcobinamide-GDP and alpha-ribazole to generate adenosylcobalamin (Ado-cobalamin). Also synthesizes adenosylcobalamin 5'-phosphate from adenosylcobinamide-GDP and alpha-ribazole 5'-phosphate.</text>
</comment>
<comment type="catalytic activity">
    <reaction evidence="1">
        <text>alpha-ribazole + adenosylcob(III)inamide-GDP = adenosylcob(III)alamin + GMP + H(+)</text>
        <dbReference type="Rhea" id="RHEA:16049"/>
        <dbReference type="ChEBI" id="CHEBI:10329"/>
        <dbReference type="ChEBI" id="CHEBI:15378"/>
        <dbReference type="ChEBI" id="CHEBI:18408"/>
        <dbReference type="ChEBI" id="CHEBI:58115"/>
        <dbReference type="ChEBI" id="CHEBI:60487"/>
        <dbReference type="EC" id="2.7.8.26"/>
    </reaction>
</comment>
<comment type="catalytic activity">
    <reaction evidence="1">
        <text>alpha-ribazole 5'-phosphate + adenosylcob(III)inamide-GDP = adenosylcob(III)alamin 5'-phosphate + GMP + H(+)</text>
        <dbReference type="Rhea" id="RHEA:23560"/>
        <dbReference type="ChEBI" id="CHEBI:15378"/>
        <dbReference type="ChEBI" id="CHEBI:57918"/>
        <dbReference type="ChEBI" id="CHEBI:58115"/>
        <dbReference type="ChEBI" id="CHEBI:60487"/>
        <dbReference type="ChEBI" id="CHEBI:60493"/>
        <dbReference type="EC" id="2.7.8.26"/>
    </reaction>
</comment>
<comment type="cofactor">
    <cofactor evidence="1">
        <name>Mg(2+)</name>
        <dbReference type="ChEBI" id="CHEBI:18420"/>
    </cofactor>
</comment>
<comment type="pathway">
    <text evidence="1">Cofactor biosynthesis; adenosylcobalamin biosynthesis; adenosylcobalamin from cob(II)yrinate a,c-diamide: step 7/7.</text>
</comment>
<comment type="subcellular location">
    <subcellularLocation>
        <location evidence="1">Cell membrane</location>
        <topology evidence="1">Multi-pass membrane protein</topology>
    </subcellularLocation>
</comment>
<comment type="similarity">
    <text evidence="1">Belongs to the CobS family.</text>
</comment>
<proteinExistence type="inferred from homology"/>
<protein>
    <recommendedName>
        <fullName evidence="1">Adenosylcobinamide-GDP ribazoletransferase</fullName>
        <ecNumber evidence="1">2.7.8.26</ecNumber>
    </recommendedName>
    <alternativeName>
        <fullName evidence="1">Cobalamin synthase</fullName>
    </alternativeName>
    <alternativeName>
        <fullName evidence="1">Cobalamin-5'-phosphate synthase</fullName>
    </alternativeName>
</protein>
<keyword id="KW-1003">Cell membrane</keyword>
<keyword id="KW-0169">Cobalamin biosynthesis</keyword>
<keyword id="KW-0460">Magnesium</keyword>
<keyword id="KW-0472">Membrane</keyword>
<keyword id="KW-0808">Transferase</keyword>
<keyword id="KW-0812">Transmembrane</keyword>
<keyword id="KW-1133">Transmembrane helix</keyword>